<accession>Q8PVR7</accession>
<keyword id="KW-0067">ATP-binding</keyword>
<keyword id="KW-0131">Cell cycle</keyword>
<keyword id="KW-0132">Cell division</keyword>
<keyword id="KW-0227">DNA damage</keyword>
<keyword id="KW-0233">DNA recombination</keyword>
<keyword id="KW-0234">DNA repair</keyword>
<keyword id="KW-0235">DNA replication</keyword>
<keyword id="KW-0436">Ligase</keyword>
<keyword id="KW-0460">Magnesium</keyword>
<keyword id="KW-0479">Metal-binding</keyword>
<keyword id="KW-0547">Nucleotide-binding</keyword>
<gene>
    <name evidence="1" type="primary">lig1</name>
    <name type="ordered locus">MM_1895</name>
</gene>
<reference key="1">
    <citation type="journal article" date="2002" name="J. Mol. Microbiol. Biotechnol.">
        <title>The genome of Methanosarcina mazei: evidence for lateral gene transfer between Bacteria and Archaea.</title>
        <authorList>
            <person name="Deppenmeier U."/>
            <person name="Johann A."/>
            <person name="Hartsch T."/>
            <person name="Merkl R."/>
            <person name="Schmitz R.A."/>
            <person name="Martinez-Arias R."/>
            <person name="Henne A."/>
            <person name="Wiezer A."/>
            <person name="Baeumer S."/>
            <person name="Jacobi C."/>
            <person name="Brueggemann H."/>
            <person name="Lienard T."/>
            <person name="Christmann A."/>
            <person name="Boemecke M."/>
            <person name="Steckel S."/>
            <person name="Bhattacharyya A."/>
            <person name="Lykidis A."/>
            <person name="Overbeek R."/>
            <person name="Klenk H.-P."/>
            <person name="Gunsalus R.P."/>
            <person name="Fritz H.-J."/>
            <person name="Gottschalk G."/>
        </authorList>
    </citation>
    <scope>NUCLEOTIDE SEQUENCE [LARGE SCALE GENOMIC DNA]</scope>
    <source>
        <strain>ATCC BAA-159 / DSM 3647 / Goe1 / Go1 / JCM 11833 / OCM 88</strain>
    </source>
</reference>
<proteinExistence type="inferred from homology"/>
<comment type="function">
    <text evidence="1">DNA ligase that seals nicks in double-stranded DNA during DNA replication, DNA recombination and DNA repair.</text>
</comment>
<comment type="catalytic activity">
    <reaction evidence="1">
        <text>ATP + (deoxyribonucleotide)n-3'-hydroxyl + 5'-phospho-(deoxyribonucleotide)m = (deoxyribonucleotide)n+m + AMP + diphosphate.</text>
        <dbReference type="EC" id="6.5.1.1"/>
    </reaction>
</comment>
<comment type="cofactor">
    <cofactor evidence="1">
        <name>Mg(2+)</name>
        <dbReference type="ChEBI" id="CHEBI:18420"/>
    </cofactor>
</comment>
<comment type="similarity">
    <text evidence="1">Belongs to the ATP-dependent DNA ligase family.</text>
</comment>
<dbReference type="EC" id="6.5.1.1" evidence="1"/>
<dbReference type="EMBL" id="AE008384">
    <property type="protein sequence ID" value="AAM31591.1"/>
    <property type="molecule type" value="Genomic_DNA"/>
</dbReference>
<dbReference type="SMR" id="Q8PVR7"/>
<dbReference type="KEGG" id="mma:MM_1895"/>
<dbReference type="PATRIC" id="fig|192952.21.peg.2183"/>
<dbReference type="eggNOG" id="arCOG01347">
    <property type="taxonomic scope" value="Archaea"/>
</dbReference>
<dbReference type="HOGENOM" id="CLU_005138_6_0_2"/>
<dbReference type="Proteomes" id="UP000000595">
    <property type="component" value="Chromosome"/>
</dbReference>
<dbReference type="GO" id="GO:0005524">
    <property type="term" value="F:ATP binding"/>
    <property type="evidence" value="ECO:0007669"/>
    <property type="project" value="UniProtKB-UniRule"/>
</dbReference>
<dbReference type="GO" id="GO:0003677">
    <property type="term" value="F:DNA binding"/>
    <property type="evidence" value="ECO:0007669"/>
    <property type="project" value="InterPro"/>
</dbReference>
<dbReference type="GO" id="GO:0003910">
    <property type="term" value="F:DNA ligase (ATP) activity"/>
    <property type="evidence" value="ECO:0007669"/>
    <property type="project" value="UniProtKB-UniRule"/>
</dbReference>
<dbReference type="GO" id="GO:0046872">
    <property type="term" value="F:metal ion binding"/>
    <property type="evidence" value="ECO:0007669"/>
    <property type="project" value="UniProtKB-KW"/>
</dbReference>
<dbReference type="GO" id="GO:0051301">
    <property type="term" value="P:cell division"/>
    <property type="evidence" value="ECO:0007669"/>
    <property type="project" value="UniProtKB-KW"/>
</dbReference>
<dbReference type="GO" id="GO:0071897">
    <property type="term" value="P:DNA biosynthetic process"/>
    <property type="evidence" value="ECO:0007669"/>
    <property type="project" value="InterPro"/>
</dbReference>
<dbReference type="GO" id="GO:0006310">
    <property type="term" value="P:DNA recombination"/>
    <property type="evidence" value="ECO:0007669"/>
    <property type="project" value="UniProtKB-UniRule"/>
</dbReference>
<dbReference type="GO" id="GO:0006281">
    <property type="term" value="P:DNA repair"/>
    <property type="evidence" value="ECO:0007669"/>
    <property type="project" value="UniProtKB-UniRule"/>
</dbReference>
<dbReference type="GO" id="GO:0006273">
    <property type="term" value="P:lagging strand elongation"/>
    <property type="evidence" value="ECO:0007669"/>
    <property type="project" value="TreeGrafter"/>
</dbReference>
<dbReference type="CDD" id="cd07901">
    <property type="entry name" value="Adenylation_DNA_ligase_Arch_LigB"/>
    <property type="match status" value="1"/>
</dbReference>
<dbReference type="CDD" id="cd07969">
    <property type="entry name" value="OBF_DNA_ligase_I"/>
    <property type="match status" value="1"/>
</dbReference>
<dbReference type="FunFam" id="1.10.3260.10:FF:000007">
    <property type="entry name" value="DNA ligase"/>
    <property type="match status" value="1"/>
</dbReference>
<dbReference type="FunFam" id="3.30.470.30:FF:000012">
    <property type="entry name" value="Probable DNA ligase"/>
    <property type="match status" value="1"/>
</dbReference>
<dbReference type="Gene3D" id="1.10.3260.10">
    <property type="entry name" value="DNA ligase, ATP-dependent, N-terminal domain"/>
    <property type="match status" value="1"/>
</dbReference>
<dbReference type="Gene3D" id="3.30.470.30">
    <property type="entry name" value="DNA ligase/mRNA capping enzyme"/>
    <property type="match status" value="1"/>
</dbReference>
<dbReference type="Gene3D" id="2.40.50.140">
    <property type="entry name" value="Nucleic acid-binding proteins"/>
    <property type="match status" value="1"/>
</dbReference>
<dbReference type="HAMAP" id="MF_00407">
    <property type="entry name" value="DNA_ligase"/>
    <property type="match status" value="1"/>
</dbReference>
<dbReference type="InterPro" id="IPR050191">
    <property type="entry name" value="ATP-dep_DNA_ligase"/>
</dbReference>
<dbReference type="InterPro" id="IPR022865">
    <property type="entry name" value="DNA_ligae_ATP-dep_bac/arc"/>
</dbReference>
<dbReference type="InterPro" id="IPR000977">
    <property type="entry name" value="DNA_ligase_ATP-dep"/>
</dbReference>
<dbReference type="InterPro" id="IPR012309">
    <property type="entry name" value="DNA_ligase_ATP-dep_C"/>
</dbReference>
<dbReference type="InterPro" id="IPR012310">
    <property type="entry name" value="DNA_ligase_ATP-dep_cent"/>
</dbReference>
<dbReference type="InterPro" id="IPR016059">
    <property type="entry name" value="DNA_ligase_ATP-dep_CS"/>
</dbReference>
<dbReference type="InterPro" id="IPR012308">
    <property type="entry name" value="DNA_ligase_ATP-dep_N"/>
</dbReference>
<dbReference type="InterPro" id="IPR036599">
    <property type="entry name" value="DNA_ligase_N_sf"/>
</dbReference>
<dbReference type="InterPro" id="IPR012340">
    <property type="entry name" value="NA-bd_OB-fold"/>
</dbReference>
<dbReference type="NCBIfam" id="TIGR00574">
    <property type="entry name" value="dnl1"/>
    <property type="match status" value="1"/>
</dbReference>
<dbReference type="PANTHER" id="PTHR45674:SF4">
    <property type="entry name" value="DNA LIGASE 1"/>
    <property type="match status" value="1"/>
</dbReference>
<dbReference type="PANTHER" id="PTHR45674">
    <property type="entry name" value="DNA LIGASE 1/3 FAMILY MEMBER"/>
    <property type="match status" value="1"/>
</dbReference>
<dbReference type="Pfam" id="PF04679">
    <property type="entry name" value="DNA_ligase_A_C"/>
    <property type="match status" value="1"/>
</dbReference>
<dbReference type="Pfam" id="PF01068">
    <property type="entry name" value="DNA_ligase_A_M"/>
    <property type="match status" value="1"/>
</dbReference>
<dbReference type="Pfam" id="PF04675">
    <property type="entry name" value="DNA_ligase_A_N"/>
    <property type="match status" value="1"/>
</dbReference>
<dbReference type="SUPFAM" id="SSF117018">
    <property type="entry name" value="ATP-dependent DNA ligase DNA-binding domain"/>
    <property type="match status" value="1"/>
</dbReference>
<dbReference type="SUPFAM" id="SSF56091">
    <property type="entry name" value="DNA ligase/mRNA capping enzyme, catalytic domain"/>
    <property type="match status" value="1"/>
</dbReference>
<dbReference type="SUPFAM" id="SSF50249">
    <property type="entry name" value="Nucleic acid-binding proteins"/>
    <property type="match status" value="1"/>
</dbReference>
<dbReference type="PROSITE" id="PS00697">
    <property type="entry name" value="DNA_LIGASE_A1"/>
    <property type="match status" value="1"/>
</dbReference>
<dbReference type="PROSITE" id="PS50160">
    <property type="entry name" value="DNA_LIGASE_A3"/>
    <property type="match status" value="1"/>
</dbReference>
<feature type="chain" id="PRO_0000365259" description="DNA ligase 1">
    <location>
        <begin position="1"/>
        <end position="579"/>
    </location>
</feature>
<feature type="active site" description="N6-AMP-lysine intermediate" evidence="1">
    <location>
        <position position="246"/>
    </location>
</feature>
<feature type="binding site" evidence="1">
    <location>
        <position position="244"/>
    </location>
    <ligand>
        <name>ATP</name>
        <dbReference type="ChEBI" id="CHEBI:30616"/>
    </ligand>
</feature>
<feature type="binding site" evidence="1">
    <location>
        <position position="251"/>
    </location>
    <ligand>
        <name>ATP</name>
        <dbReference type="ChEBI" id="CHEBI:30616"/>
    </ligand>
</feature>
<feature type="binding site" evidence="1">
    <location>
        <position position="266"/>
    </location>
    <ligand>
        <name>ATP</name>
        <dbReference type="ChEBI" id="CHEBI:30616"/>
    </ligand>
</feature>
<feature type="binding site" evidence="1">
    <location>
        <position position="296"/>
    </location>
    <ligand>
        <name>ATP</name>
        <dbReference type="ChEBI" id="CHEBI:30616"/>
    </ligand>
</feature>
<feature type="binding site" evidence="1">
    <location>
        <position position="342"/>
    </location>
    <ligand>
        <name>ATP</name>
        <dbReference type="ChEBI" id="CHEBI:30616"/>
    </ligand>
</feature>
<feature type="binding site" evidence="1">
    <location>
        <position position="419"/>
    </location>
    <ligand>
        <name>ATP</name>
        <dbReference type="ChEBI" id="CHEBI:30616"/>
    </ligand>
</feature>
<feature type="binding site" evidence="1">
    <location>
        <position position="425"/>
    </location>
    <ligand>
        <name>ATP</name>
        <dbReference type="ChEBI" id="CHEBI:30616"/>
    </ligand>
</feature>
<organism>
    <name type="scientific">Methanosarcina mazei (strain ATCC BAA-159 / DSM 3647 / Goe1 / Go1 / JCM 11833 / OCM 88)</name>
    <name type="common">Methanosarcina frisia</name>
    <dbReference type="NCBI Taxonomy" id="192952"/>
    <lineage>
        <taxon>Archaea</taxon>
        <taxon>Methanobacteriati</taxon>
        <taxon>Methanobacteriota</taxon>
        <taxon>Stenosarchaea group</taxon>
        <taxon>Methanomicrobia</taxon>
        <taxon>Methanosarcinales</taxon>
        <taxon>Methanosarcinaceae</taxon>
        <taxon>Methanosarcina</taxon>
    </lineage>
</organism>
<sequence length="579" mass="65867">MRFKELAELFEELEKTTSHREIVRKISEFFKNLRGDEVKDSAYLFLGSTGPAFENTTLGIKDMLAIRAIAGAYGVTREDVRKRYARTGDLGDVAFELSKKRESSLTIEDVFQRLLQIRETSGKGSQEEKTALFSDILQKATPEEGKYIVRLVLGRLRLGFGDQFLLEAFAIAFTGDKKHAAKIKESYSVCTDIGELAKILAENGARATGFISIKPGRPVKSMLSQRVESFEELEKRVKGKKAAEEKYDGERVQVHKTGEGIKAFSRRLEDITSQYPEIIEDVRKTVPANEIVLDGEIVAYAELERNGNRIEEFYPFQNLMQRRRKYEIENYRKKCPVAVFFFDILYLNGEPLLKRPYPERRALLEMNVVESGIIRLSKRIVTESVEEIEDFFNETIEKGLEGIVVKSMSSNSYYEAGKRSWFWFKWKQEYSEGMRETFDLVVVGSYYGRGRRKGSFGALLCAVLNKEGQRFETLTKVGTGFTEADAEEINRLLSDHIVSEIPKGVSIKKGMLPDIFIEPAVVIEVLGSEITNSPGHTAGEGEEETGLALRFPRFLRIRHDKTPYDAMTVKEVRDLKDGT</sequence>
<name>DNLI1_METMA</name>
<protein>
    <recommendedName>
        <fullName evidence="1">DNA ligase 1</fullName>
        <ecNumber evidence="1">6.5.1.1</ecNumber>
    </recommendedName>
    <alternativeName>
        <fullName evidence="1">Polydeoxyribonucleotide synthase [ATP] 1</fullName>
    </alternativeName>
</protein>
<evidence type="ECO:0000255" key="1">
    <source>
        <dbReference type="HAMAP-Rule" id="MF_00407"/>
    </source>
</evidence>